<keyword id="KW-0030">Aminoacyl-tRNA synthetase</keyword>
<keyword id="KW-0067">ATP-binding</keyword>
<keyword id="KW-0963">Cytoplasm</keyword>
<keyword id="KW-0436">Ligase</keyword>
<keyword id="KW-0479">Metal-binding</keyword>
<keyword id="KW-0547">Nucleotide-binding</keyword>
<keyword id="KW-0648">Protein biosynthesis</keyword>
<keyword id="KW-0694">RNA-binding</keyword>
<keyword id="KW-0820">tRNA-binding</keyword>
<keyword id="KW-0862">Zinc</keyword>
<comment type="function">
    <text evidence="1">Catalyzes the attachment of threonine to tRNA(Thr) in a two-step reaction: L-threonine is first activated by ATP to form Thr-AMP and then transferred to the acceptor end of tRNA(Thr). Also edits incorrectly charged L-seryl-tRNA(Thr).</text>
</comment>
<comment type="catalytic activity">
    <reaction evidence="1">
        <text>tRNA(Thr) + L-threonine + ATP = L-threonyl-tRNA(Thr) + AMP + diphosphate + H(+)</text>
        <dbReference type="Rhea" id="RHEA:24624"/>
        <dbReference type="Rhea" id="RHEA-COMP:9670"/>
        <dbReference type="Rhea" id="RHEA-COMP:9704"/>
        <dbReference type="ChEBI" id="CHEBI:15378"/>
        <dbReference type="ChEBI" id="CHEBI:30616"/>
        <dbReference type="ChEBI" id="CHEBI:33019"/>
        <dbReference type="ChEBI" id="CHEBI:57926"/>
        <dbReference type="ChEBI" id="CHEBI:78442"/>
        <dbReference type="ChEBI" id="CHEBI:78534"/>
        <dbReference type="ChEBI" id="CHEBI:456215"/>
        <dbReference type="EC" id="6.1.1.3"/>
    </reaction>
</comment>
<comment type="cofactor">
    <cofactor evidence="1">
        <name>Zn(2+)</name>
        <dbReference type="ChEBI" id="CHEBI:29105"/>
    </cofactor>
    <text evidence="1">Binds 1 zinc ion per subunit.</text>
</comment>
<comment type="subunit">
    <text evidence="1">Homodimer.</text>
</comment>
<comment type="subcellular location">
    <subcellularLocation>
        <location evidence="1">Cytoplasm</location>
    </subcellularLocation>
</comment>
<comment type="similarity">
    <text evidence="1">Belongs to the class-II aminoacyl-tRNA synthetase family.</text>
</comment>
<proteinExistence type="inferred from homology"/>
<evidence type="ECO:0000255" key="1">
    <source>
        <dbReference type="HAMAP-Rule" id="MF_00184"/>
    </source>
</evidence>
<evidence type="ECO:0000255" key="2">
    <source>
        <dbReference type="PROSITE-ProRule" id="PRU01228"/>
    </source>
</evidence>
<name>SYT_BIFLD</name>
<protein>
    <recommendedName>
        <fullName evidence="1">Threonine--tRNA ligase</fullName>
        <ecNumber evidence="1">6.1.1.3</ecNumber>
    </recommendedName>
    <alternativeName>
        <fullName evidence="1">Threonyl-tRNA synthetase</fullName>
        <shortName evidence="1">ThrRS</shortName>
    </alternativeName>
</protein>
<feature type="chain" id="PRO_1000098542" description="Threonine--tRNA ligase">
    <location>
        <begin position="1"/>
        <end position="677"/>
    </location>
</feature>
<feature type="domain" description="TGS" evidence="2">
    <location>
        <begin position="1"/>
        <end position="59"/>
    </location>
</feature>
<feature type="region of interest" description="Catalytic" evidence="1">
    <location>
        <begin position="255"/>
        <end position="561"/>
    </location>
</feature>
<feature type="binding site" evidence="1">
    <location>
        <position position="360"/>
    </location>
    <ligand>
        <name>Zn(2+)</name>
        <dbReference type="ChEBI" id="CHEBI:29105"/>
    </ligand>
</feature>
<feature type="binding site" evidence="1">
    <location>
        <position position="411"/>
    </location>
    <ligand>
        <name>Zn(2+)</name>
        <dbReference type="ChEBI" id="CHEBI:29105"/>
    </ligand>
</feature>
<feature type="binding site" evidence="1">
    <location>
        <position position="538"/>
    </location>
    <ligand>
        <name>Zn(2+)</name>
        <dbReference type="ChEBI" id="CHEBI:29105"/>
    </ligand>
</feature>
<sequence length="677" mass="76850">MAQATISITVNGEAKEVEATTTGVELFAEDKNIIAVKINGENRDLYTPLNDGDTVDPIALDSEDGLAIMRHSATHVMAQAVQEVYPNAKLGVGPVIKDGFYYDFQVDQPFTPDDLKDIEKRMQRIIKSSQSFRRRSVTEEEALKEEADQPFKIELIEDKEAHLDPAAATEISEKELSFYDNVDRDGNVVWKDLCRGPHLPNTRYIKAFKIERSAAAYWRGSEKNPTMQRIYGTAWATKEDLKAYQTRLEEAAKRDHRKLGAEMDLFSFPDEIGPGLAVFHPKGAAVINAMEDYSREMHRKHHYSFVQTPHITKGGLYETSGHLHWYKDGMYPPMHLDEEKDADGNITKPGADYYLKPMNCPMHNLIFKSRQRSYRELPLRLFEFGTVYRYEKSGEVHGLTRVRGLTQDDSHIYCTREQMKDELTSLLTFVLNLLKDFGLTDFYLELSTKDPNKYVGSDEIWEEATNTLAEVAKESNLELVDDPCGAAFYGPKISVQARDAIGRTWQVSTIQLDFNLPERFQLEYIAKDGTHQRPVMIHRALFGSIERFFAVLLEHYAGAFPAWLAPVQVLGVPVADEFAPHLAGFVKSLEDEMVRCEIDYSDDRFGKKIRNASKSKVPFILIVGEEDMNNNAVSFRFRDGSQLNGVPVDTAREQILTVIKKRVQVNSADDFNAAVAE</sequence>
<accession>B3DRX5</accession>
<reference key="1">
    <citation type="journal article" date="2008" name="BMC Genomics">
        <title>Comparative genomic analysis of the gut bacterium Bifidobacterium longum reveals loci susceptible to deletion during pure culture growth.</title>
        <authorList>
            <person name="Lee J.H."/>
            <person name="Karamychev V.N."/>
            <person name="Kozyavkin S.A."/>
            <person name="Mills D."/>
            <person name="Pavlov A.R."/>
            <person name="Pavlova N.V."/>
            <person name="Polouchine N.N."/>
            <person name="Richardson P.M."/>
            <person name="Shakhova V.V."/>
            <person name="Slesarev A.I."/>
            <person name="Weimer B."/>
            <person name="O'Sullivan D.J."/>
        </authorList>
    </citation>
    <scope>NUCLEOTIDE SEQUENCE [LARGE SCALE GENOMIC DNA]</scope>
    <source>
        <strain>DJO10A</strain>
    </source>
</reference>
<gene>
    <name evidence="1" type="primary">thrS</name>
    <name type="ordered locus">BLD_0448</name>
</gene>
<organism>
    <name type="scientific">Bifidobacterium longum (strain DJO10A)</name>
    <dbReference type="NCBI Taxonomy" id="205913"/>
    <lineage>
        <taxon>Bacteria</taxon>
        <taxon>Bacillati</taxon>
        <taxon>Actinomycetota</taxon>
        <taxon>Actinomycetes</taxon>
        <taxon>Bifidobacteriales</taxon>
        <taxon>Bifidobacteriaceae</taxon>
        <taxon>Bifidobacterium</taxon>
    </lineage>
</organism>
<dbReference type="EC" id="6.1.1.3" evidence="1"/>
<dbReference type="EMBL" id="CP000605">
    <property type="protein sequence ID" value="ACD97894.1"/>
    <property type="molecule type" value="Genomic_DNA"/>
</dbReference>
<dbReference type="RefSeq" id="WP_010080660.1">
    <property type="nucleotide sequence ID" value="NZ_AABM02000001.1"/>
</dbReference>
<dbReference type="SMR" id="B3DRX5"/>
<dbReference type="KEGG" id="blj:BLD_0448"/>
<dbReference type="HOGENOM" id="CLU_008554_0_1_11"/>
<dbReference type="Proteomes" id="UP000002419">
    <property type="component" value="Chromosome"/>
</dbReference>
<dbReference type="GO" id="GO:0005737">
    <property type="term" value="C:cytoplasm"/>
    <property type="evidence" value="ECO:0007669"/>
    <property type="project" value="UniProtKB-SubCell"/>
</dbReference>
<dbReference type="GO" id="GO:0005524">
    <property type="term" value="F:ATP binding"/>
    <property type="evidence" value="ECO:0007669"/>
    <property type="project" value="UniProtKB-UniRule"/>
</dbReference>
<dbReference type="GO" id="GO:0046872">
    <property type="term" value="F:metal ion binding"/>
    <property type="evidence" value="ECO:0007669"/>
    <property type="project" value="UniProtKB-KW"/>
</dbReference>
<dbReference type="GO" id="GO:0004829">
    <property type="term" value="F:threonine-tRNA ligase activity"/>
    <property type="evidence" value="ECO:0007669"/>
    <property type="project" value="UniProtKB-UniRule"/>
</dbReference>
<dbReference type="GO" id="GO:0000049">
    <property type="term" value="F:tRNA binding"/>
    <property type="evidence" value="ECO:0007669"/>
    <property type="project" value="UniProtKB-KW"/>
</dbReference>
<dbReference type="GO" id="GO:0006435">
    <property type="term" value="P:threonyl-tRNA aminoacylation"/>
    <property type="evidence" value="ECO:0007669"/>
    <property type="project" value="UniProtKB-UniRule"/>
</dbReference>
<dbReference type="CDD" id="cd01667">
    <property type="entry name" value="TGS_ThrRS"/>
    <property type="match status" value="1"/>
</dbReference>
<dbReference type="CDD" id="cd00860">
    <property type="entry name" value="ThrRS_anticodon"/>
    <property type="match status" value="1"/>
</dbReference>
<dbReference type="CDD" id="cd00771">
    <property type="entry name" value="ThrRS_core"/>
    <property type="match status" value="1"/>
</dbReference>
<dbReference type="FunFam" id="3.30.930.10:FF:000019">
    <property type="entry name" value="Threonine--tRNA ligase"/>
    <property type="match status" value="1"/>
</dbReference>
<dbReference type="FunFam" id="3.30.980.10:FF:000005">
    <property type="entry name" value="Threonyl-tRNA synthetase, mitochondrial"/>
    <property type="match status" value="1"/>
</dbReference>
<dbReference type="Gene3D" id="3.30.54.20">
    <property type="match status" value="1"/>
</dbReference>
<dbReference type="Gene3D" id="3.40.50.800">
    <property type="entry name" value="Anticodon-binding domain"/>
    <property type="match status" value="1"/>
</dbReference>
<dbReference type="Gene3D" id="3.30.930.10">
    <property type="entry name" value="Bira Bifunctional Protein, Domain 2"/>
    <property type="match status" value="1"/>
</dbReference>
<dbReference type="Gene3D" id="3.30.980.10">
    <property type="entry name" value="Threonyl-trna Synthetase, Chain A, domain 2"/>
    <property type="match status" value="1"/>
</dbReference>
<dbReference type="HAMAP" id="MF_00184">
    <property type="entry name" value="Thr_tRNA_synth"/>
    <property type="match status" value="1"/>
</dbReference>
<dbReference type="InterPro" id="IPR002314">
    <property type="entry name" value="aa-tRNA-synt_IIb"/>
</dbReference>
<dbReference type="InterPro" id="IPR006195">
    <property type="entry name" value="aa-tRNA-synth_II"/>
</dbReference>
<dbReference type="InterPro" id="IPR045864">
    <property type="entry name" value="aa-tRNA-synth_II/BPL/LPL"/>
</dbReference>
<dbReference type="InterPro" id="IPR004154">
    <property type="entry name" value="Anticodon-bd"/>
</dbReference>
<dbReference type="InterPro" id="IPR036621">
    <property type="entry name" value="Anticodon-bd_dom_sf"/>
</dbReference>
<dbReference type="InterPro" id="IPR004095">
    <property type="entry name" value="TGS"/>
</dbReference>
<dbReference type="InterPro" id="IPR002320">
    <property type="entry name" value="Thr-tRNA-ligase_IIa"/>
</dbReference>
<dbReference type="InterPro" id="IPR018163">
    <property type="entry name" value="Thr/Ala-tRNA-synth_IIc_edit"/>
</dbReference>
<dbReference type="InterPro" id="IPR047246">
    <property type="entry name" value="ThrRS_anticodon"/>
</dbReference>
<dbReference type="InterPro" id="IPR033728">
    <property type="entry name" value="ThrRS_core"/>
</dbReference>
<dbReference type="InterPro" id="IPR012947">
    <property type="entry name" value="tRNA_SAD"/>
</dbReference>
<dbReference type="NCBIfam" id="TIGR00418">
    <property type="entry name" value="thrS"/>
    <property type="match status" value="1"/>
</dbReference>
<dbReference type="PANTHER" id="PTHR11451:SF44">
    <property type="entry name" value="THREONINE--TRNA LIGASE, CHLOROPLASTIC_MITOCHONDRIAL 2"/>
    <property type="match status" value="1"/>
</dbReference>
<dbReference type="PANTHER" id="PTHR11451">
    <property type="entry name" value="THREONINE-TRNA LIGASE"/>
    <property type="match status" value="1"/>
</dbReference>
<dbReference type="Pfam" id="PF03129">
    <property type="entry name" value="HGTP_anticodon"/>
    <property type="match status" value="1"/>
</dbReference>
<dbReference type="Pfam" id="PF00587">
    <property type="entry name" value="tRNA-synt_2b"/>
    <property type="match status" value="1"/>
</dbReference>
<dbReference type="Pfam" id="PF07973">
    <property type="entry name" value="tRNA_SAD"/>
    <property type="match status" value="1"/>
</dbReference>
<dbReference type="PRINTS" id="PR01047">
    <property type="entry name" value="TRNASYNTHTHR"/>
</dbReference>
<dbReference type="SMART" id="SM00863">
    <property type="entry name" value="tRNA_SAD"/>
    <property type="match status" value="1"/>
</dbReference>
<dbReference type="SUPFAM" id="SSF52954">
    <property type="entry name" value="Class II aaRS ABD-related"/>
    <property type="match status" value="1"/>
</dbReference>
<dbReference type="SUPFAM" id="SSF55681">
    <property type="entry name" value="Class II aaRS and biotin synthetases"/>
    <property type="match status" value="1"/>
</dbReference>
<dbReference type="SUPFAM" id="SSF55186">
    <property type="entry name" value="ThrRS/AlaRS common domain"/>
    <property type="match status" value="1"/>
</dbReference>
<dbReference type="PROSITE" id="PS50862">
    <property type="entry name" value="AA_TRNA_LIGASE_II"/>
    <property type="match status" value="1"/>
</dbReference>
<dbReference type="PROSITE" id="PS51880">
    <property type="entry name" value="TGS"/>
    <property type="match status" value="1"/>
</dbReference>